<gene>
    <name evidence="1" type="primary">kdpA</name>
    <name type="ordered locus">Krad_1016</name>
</gene>
<protein>
    <recommendedName>
        <fullName evidence="1">Potassium-transporting ATPase potassium-binding subunit</fullName>
    </recommendedName>
    <alternativeName>
        <fullName evidence="1">ATP phosphohydrolase [potassium-transporting] A chain</fullName>
    </alternativeName>
    <alternativeName>
        <fullName evidence="1">Potassium-binding and translocating subunit A</fullName>
    </alternativeName>
    <alternativeName>
        <fullName evidence="1">Potassium-translocating ATPase A chain</fullName>
    </alternativeName>
</protein>
<sequence length="557" mass="57238">MGDLGAGLLQAGLLLLLLAAVHVPLGDFLARTFAGTRHLRLERGIYRVLRVDADADTRWPTYALSVLGFSTVSILFLYAFLRLQGFLPLSLGRPGMEPTQAWNTAVSFVGNTNWQSYAGESTLGHLVQMAGLTVQNFLSAAVGLAVAVALVRGLVARGTGTIGNFWVDLTRGTLRVLLPLAFAGAVLLLLTGVVQNFTGATTYPTLAGGSQTILGGPIASQEAVKELGTNGGGFFNANSAHPFENPNAVSNLLEVFLILVIPFSLPRAFGTLVGDHRQGLAVLSVMGTIFGASLALTTWAETHAGGSVPQAAGAAMEGKETRFGEWASALFATATTATSTGAVNSAHDSYTAAGGGVVLLNLVMGEVTPGGVGSGLYGMLVLAVITVFVAGLMVGRTPEYLGKRIGQREITCAALYVLVTPAVLLTGTAVALSDAATRSALLNTGSHGLTEMLYAFASAANNNGSAFAGLSANTPFYNTALGLAIWLGRFLPMVLVLALAGAFAAQRTAAETAGTLPTRSPTFAGMHLAVVVVVSALTFFPALALGPIAEALTGAQS</sequence>
<dbReference type="EMBL" id="CP000750">
    <property type="protein sequence ID" value="ABS02504.1"/>
    <property type="molecule type" value="Genomic_DNA"/>
</dbReference>
<dbReference type="RefSeq" id="WP_012084644.1">
    <property type="nucleotide sequence ID" value="NC_009664.2"/>
</dbReference>
<dbReference type="SMR" id="A6W6R5"/>
<dbReference type="STRING" id="266940.Krad_1016"/>
<dbReference type="KEGG" id="kra:Krad_1016"/>
<dbReference type="eggNOG" id="COG2060">
    <property type="taxonomic scope" value="Bacteria"/>
</dbReference>
<dbReference type="HOGENOM" id="CLU_018614_3_0_11"/>
<dbReference type="OrthoDB" id="9763796at2"/>
<dbReference type="Proteomes" id="UP000001116">
    <property type="component" value="Chromosome"/>
</dbReference>
<dbReference type="GO" id="GO:0005886">
    <property type="term" value="C:plasma membrane"/>
    <property type="evidence" value="ECO:0007669"/>
    <property type="project" value="UniProtKB-SubCell"/>
</dbReference>
<dbReference type="GO" id="GO:0008556">
    <property type="term" value="F:P-type potassium transmembrane transporter activity"/>
    <property type="evidence" value="ECO:0007669"/>
    <property type="project" value="InterPro"/>
</dbReference>
<dbReference type="GO" id="GO:0030955">
    <property type="term" value="F:potassium ion binding"/>
    <property type="evidence" value="ECO:0007669"/>
    <property type="project" value="UniProtKB-UniRule"/>
</dbReference>
<dbReference type="HAMAP" id="MF_00275">
    <property type="entry name" value="KdpA"/>
    <property type="match status" value="1"/>
</dbReference>
<dbReference type="InterPro" id="IPR004623">
    <property type="entry name" value="KdpA"/>
</dbReference>
<dbReference type="NCBIfam" id="TIGR00680">
    <property type="entry name" value="kdpA"/>
    <property type="match status" value="1"/>
</dbReference>
<dbReference type="PANTHER" id="PTHR30607">
    <property type="entry name" value="POTASSIUM-TRANSPORTING ATPASE A CHAIN"/>
    <property type="match status" value="1"/>
</dbReference>
<dbReference type="PANTHER" id="PTHR30607:SF2">
    <property type="entry name" value="POTASSIUM-TRANSPORTING ATPASE POTASSIUM-BINDING SUBUNIT"/>
    <property type="match status" value="1"/>
</dbReference>
<dbReference type="Pfam" id="PF03814">
    <property type="entry name" value="KdpA"/>
    <property type="match status" value="1"/>
</dbReference>
<dbReference type="PIRSF" id="PIRSF001294">
    <property type="entry name" value="K_ATPaseA"/>
    <property type="match status" value="1"/>
</dbReference>
<name>KDPA_KINRD</name>
<reference key="1">
    <citation type="journal article" date="2008" name="PLoS ONE">
        <title>Survival in nuclear waste, extreme resistance, and potential applications gleaned from the genome sequence of Kineococcus radiotolerans SRS30216.</title>
        <authorList>
            <person name="Bagwell C.E."/>
            <person name="Bhat S."/>
            <person name="Hawkins G.M."/>
            <person name="Smith B.W."/>
            <person name="Biswas T."/>
            <person name="Hoover T.R."/>
            <person name="Saunders E."/>
            <person name="Han C.S."/>
            <person name="Tsodikov O.V."/>
            <person name="Shimkets L.J."/>
        </authorList>
    </citation>
    <scope>NUCLEOTIDE SEQUENCE [LARGE SCALE GENOMIC DNA]</scope>
    <source>
        <strain>ATCC BAA-149 / DSM 14245 / SRS30216</strain>
    </source>
</reference>
<evidence type="ECO:0000255" key="1">
    <source>
        <dbReference type="HAMAP-Rule" id="MF_00275"/>
    </source>
</evidence>
<organism>
    <name type="scientific">Kineococcus radiotolerans (strain ATCC BAA-149 / DSM 14245 / SRS30216)</name>
    <dbReference type="NCBI Taxonomy" id="266940"/>
    <lineage>
        <taxon>Bacteria</taxon>
        <taxon>Bacillati</taxon>
        <taxon>Actinomycetota</taxon>
        <taxon>Actinomycetes</taxon>
        <taxon>Kineosporiales</taxon>
        <taxon>Kineosporiaceae</taxon>
        <taxon>Kineococcus</taxon>
    </lineage>
</organism>
<feature type="chain" id="PRO_1000078783" description="Potassium-transporting ATPase potassium-binding subunit">
    <location>
        <begin position="1"/>
        <end position="557"/>
    </location>
</feature>
<feature type="transmembrane region" description="Helical" evidence="1">
    <location>
        <begin position="4"/>
        <end position="24"/>
    </location>
</feature>
<feature type="transmembrane region" description="Helical" evidence="1">
    <location>
        <begin position="61"/>
        <end position="81"/>
    </location>
</feature>
<feature type="transmembrane region" description="Helical" evidence="1">
    <location>
        <begin position="131"/>
        <end position="151"/>
    </location>
</feature>
<feature type="transmembrane region" description="Helical" evidence="1">
    <location>
        <begin position="174"/>
        <end position="194"/>
    </location>
</feature>
<feature type="transmembrane region" description="Helical" evidence="1">
    <location>
        <begin position="253"/>
        <end position="273"/>
    </location>
</feature>
<feature type="transmembrane region" description="Helical" evidence="1">
    <location>
        <begin position="280"/>
        <end position="300"/>
    </location>
</feature>
<feature type="transmembrane region" description="Helical" evidence="1">
    <location>
        <begin position="375"/>
        <end position="395"/>
    </location>
</feature>
<feature type="transmembrane region" description="Helical" evidence="1">
    <location>
        <begin position="412"/>
        <end position="432"/>
    </location>
</feature>
<feature type="transmembrane region" description="Helical" evidence="1">
    <location>
        <begin position="483"/>
        <end position="503"/>
    </location>
</feature>
<feature type="transmembrane region" description="Helical" evidence="1">
    <location>
        <begin position="528"/>
        <end position="548"/>
    </location>
</feature>
<comment type="function">
    <text evidence="1">Part of the high-affinity ATP-driven potassium transport (or Kdp) system, which catalyzes the hydrolysis of ATP coupled with the electrogenic transport of potassium into the cytoplasm. This subunit binds the extracellular potassium ions and delivers the ions to the membrane domain of KdpB through an intramembrane tunnel.</text>
</comment>
<comment type="subunit">
    <text evidence="1">The system is composed of three essential subunits: KdpA, KdpB and KdpC.</text>
</comment>
<comment type="subcellular location">
    <subcellularLocation>
        <location evidence="1">Cell membrane</location>
        <topology evidence="1">Multi-pass membrane protein</topology>
    </subcellularLocation>
</comment>
<comment type="similarity">
    <text evidence="1">Belongs to the KdpA family.</text>
</comment>
<proteinExistence type="inferred from homology"/>
<keyword id="KW-1003">Cell membrane</keyword>
<keyword id="KW-0406">Ion transport</keyword>
<keyword id="KW-0472">Membrane</keyword>
<keyword id="KW-0630">Potassium</keyword>
<keyword id="KW-0633">Potassium transport</keyword>
<keyword id="KW-1185">Reference proteome</keyword>
<keyword id="KW-0812">Transmembrane</keyword>
<keyword id="KW-1133">Transmembrane helix</keyword>
<keyword id="KW-0813">Transport</keyword>
<accession>A6W6R5</accession>